<evidence type="ECO:0000255" key="1">
    <source>
        <dbReference type="HAMAP-Rule" id="MF_00044"/>
    </source>
</evidence>
<gene>
    <name evidence="1" type="primary">aspS</name>
    <name type="ordered locus">CHAB381_0296</name>
</gene>
<feature type="chain" id="PRO_1000006656" description="Aspartate--tRNA(Asp/Asn) ligase">
    <location>
        <begin position="1"/>
        <end position="584"/>
    </location>
</feature>
<feature type="region of interest" description="Aspartate" evidence="1">
    <location>
        <begin position="197"/>
        <end position="200"/>
    </location>
</feature>
<feature type="binding site" evidence="1">
    <location>
        <position position="173"/>
    </location>
    <ligand>
        <name>L-aspartate</name>
        <dbReference type="ChEBI" id="CHEBI:29991"/>
    </ligand>
</feature>
<feature type="binding site" evidence="1">
    <location>
        <begin position="219"/>
        <end position="221"/>
    </location>
    <ligand>
        <name>ATP</name>
        <dbReference type="ChEBI" id="CHEBI:30616"/>
    </ligand>
</feature>
<feature type="binding site" evidence="1">
    <location>
        <position position="219"/>
    </location>
    <ligand>
        <name>L-aspartate</name>
        <dbReference type="ChEBI" id="CHEBI:29991"/>
    </ligand>
</feature>
<feature type="binding site" evidence="1">
    <location>
        <position position="228"/>
    </location>
    <ligand>
        <name>ATP</name>
        <dbReference type="ChEBI" id="CHEBI:30616"/>
    </ligand>
</feature>
<feature type="binding site" evidence="1">
    <location>
        <position position="447"/>
    </location>
    <ligand>
        <name>L-aspartate</name>
        <dbReference type="ChEBI" id="CHEBI:29991"/>
    </ligand>
</feature>
<feature type="binding site" evidence="1">
    <location>
        <position position="477"/>
    </location>
    <ligand>
        <name>ATP</name>
        <dbReference type="ChEBI" id="CHEBI:30616"/>
    </ligand>
</feature>
<feature type="binding site" evidence="1">
    <location>
        <position position="484"/>
    </location>
    <ligand>
        <name>L-aspartate</name>
        <dbReference type="ChEBI" id="CHEBI:29991"/>
    </ligand>
</feature>
<feature type="binding site" evidence="1">
    <location>
        <begin position="529"/>
        <end position="532"/>
    </location>
    <ligand>
        <name>ATP</name>
        <dbReference type="ChEBI" id="CHEBI:30616"/>
    </ligand>
</feature>
<feature type="site" description="Important for tRNA non-discrimination" evidence="1">
    <location>
        <position position="30"/>
    </location>
</feature>
<organism>
    <name type="scientific">Campylobacter hominis (strain ATCC BAA-381 / DSM 21671 / CCUG 45161 / LMG 19568 / NCTC 13146 / CH001A)</name>
    <dbReference type="NCBI Taxonomy" id="360107"/>
    <lineage>
        <taxon>Bacteria</taxon>
        <taxon>Pseudomonadati</taxon>
        <taxon>Campylobacterota</taxon>
        <taxon>Epsilonproteobacteria</taxon>
        <taxon>Campylobacterales</taxon>
        <taxon>Campylobacteraceae</taxon>
        <taxon>Campylobacter</taxon>
    </lineage>
</organism>
<protein>
    <recommendedName>
        <fullName evidence="1">Aspartate--tRNA(Asp/Asn) ligase</fullName>
        <ecNumber evidence="1">6.1.1.23</ecNumber>
    </recommendedName>
    <alternativeName>
        <fullName evidence="1">Aspartyl-tRNA synthetase</fullName>
        <shortName evidence="1">AspRS</shortName>
    </alternativeName>
    <alternativeName>
        <fullName evidence="1">Non-discriminating aspartyl-tRNA synthetase</fullName>
        <shortName evidence="1">ND-AspRS</shortName>
    </alternativeName>
</protein>
<sequence length="584" mass="66704">MRSNYCTELDSGDIGKIVDVCGWVNSYRDHGGVIFIDLRDRSGLIQLVCDPKHSQEAYTIANSVRDEFVLRAHGKIRARGKDLINPKLKTGEIEVVVENLIVENPSKPLPFVIGDKNVSEETRLKYRFLDLRTNENFNKFFTRSKAAIAARNALDRLGFVEVETPILTRATPEGARDYLVPSRVYNGQFYALPQSPQLFKQLLMCSCFDKYFQIARCFRDEDLRADRQPEFTQIDIEMSFCDQKDVMKVGEAVLKDIFKSCGKDIKTPFRVMQYKDAMENYGSDKPDLRFGMKFIDVADIFEKSSNEIFANIAKDKKKNRVKAIKVEGGDLKFSKRQMQRFEEYVRKFGAQGLAFIQVKEEGLKGPLVKFFEKSEIDELVKRCELKVGDVVFFGAGKKKIVLDYMGRFRIFLANELELINPDALEFLWVVDFPMFEQNEDGTYSAMHHPFTMPNNVDEPDIEEITSIAYDVVLNGIELGGGSIRIHKEDIQEKVFKLLKIEPAEQREKFGFLLDALSFGAPPHGGIAIGFDRLMMLVTRSSSIRDVIAFPKTQRAQCLLTKAPSGISNEQLRELGLKINKKEQK</sequence>
<keyword id="KW-0030">Aminoacyl-tRNA synthetase</keyword>
<keyword id="KW-0067">ATP-binding</keyword>
<keyword id="KW-0963">Cytoplasm</keyword>
<keyword id="KW-0436">Ligase</keyword>
<keyword id="KW-0547">Nucleotide-binding</keyword>
<keyword id="KW-0648">Protein biosynthesis</keyword>
<keyword id="KW-1185">Reference proteome</keyword>
<reference key="1">
    <citation type="submission" date="2007-07" db="EMBL/GenBank/DDBJ databases">
        <title>Complete genome sequence of Campylobacter hominis ATCC BAA-381, a commensal isolated from the human gastrointestinal tract.</title>
        <authorList>
            <person name="Fouts D.E."/>
            <person name="Mongodin E.F."/>
            <person name="Puiu D."/>
            <person name="Sebastian Y."/>
            <person name="Miller W.G."/>
            <person name="Mandrell R.E."/>
            <person name="Nelson K.E."/>
        </authorList>
    </citation>
    <scope>NUCLEOTIDE SEQUENCE [LARGE SCALE GENOMIC DNA]</scope>
    <source>
        <strain>ATCC BAA-381 / DSM 21671 / CCUG 45161 / LMG 19568 / NCTC 13146 / CH001A</strain>
    </source>
</reference>
<comment type="function">
    <text evidence="1">Aspartyl-tRNA synthetase with relaxed tRNA specificity since it is able to aspartylate not only its cognate tRNA(Asp) but also tRNA(Asn). Reaction proceeds in two steps: L-aspartate is first activated by ATP to form Asp-AMP and then transferred to the acceptor end of tRNA(Asp/Asn).</text>
</comment>
<comment type="catalytic activity">
    <reaction evidence="1">
        <text>tRNA(Asx) + L-aspartate + ATP = L-aspartyl-tRNA(Asx) + AMP + diphosphate</text>
        <dbReference type="Rhea" id="RHEA:18349"/>
        <dbReference type="Rhea" id="RHEA-COMP:9710"/>
        <dbReference type="Rhea" id="RHEA-COMP:9711"/>
        <dbReference type="ChEBI" id="CHEBI:29991"/>
        <dbReference type="ChEBI" id="CHEBI:30616"/>
        <dbReference type="ChEBI" id="CHEBI:33019"/>
        <dbReference type="ChEBI" id="CHEBI:78442"/>
        <dbReference type="ChEBI" id="CHEBI:78516"/>
        <dbReference type="ChEBI" id="CHEBI:456215"/>
        <dbReference type="EC" id="6.1.1.23"/>
    </reaction>
</comment>
<comment type="subunit">
    <text evidence="1">Homodimer.</text>
</comment>
<comment type="subcellular location">
    <subcellularLocation>
        <location evidence="1">Cytoplasm</location>
    </subcellularLocation>
</comment>
<comment type="similarity">
    <text evidence="1">Belongs to the class-II aminoacyl-tRNA synthetase family. Type 1 subfamily.</text>
</comment>
<accession>A7I058</accession>
<dbReference type="EC" id="6.1.1.23" evidence="1"/>
<dbReference type="EMBL" id="CP000776">
    <property type="protein sequence ID" value="ABS52442.1"/>
    <property type="molecule type" value="Genomic_DNA"/>
</dbReference>
<dbReference type="RefSeq" id="WP_012108181.1">
    <property type="nucleotide sequence ID" value="NC_009714.1"/>
</dbReference>
<dbReference type="SMR" id="A7I058"/>
<dbReference type="STRING" id="360107.CHAB381_0296"/>
<dbReference type="KEGG" id="cha:CHAB381_0296"/>
<dbReference type="eggNOG" id="COG0173">
    <property type="taxonomic scope" value="Bacteria"/>
</dbReference>
<dbReference type="HOGENOM" id="CLU_014330_3_2_7"/>
<dbReference type="OrthoDB" id="9802326at2"/>
<dbReference type="Proteomes" id="UP000002407">
    <property type="component" value="Chromosome"/>
</dbReference>
<dbReference type="GO" id="GO:0005737">
    <property type="term" value="C:cytoplasm"/>
    <property type="evidence" value="ECO:0007669"/>
    <property type="project" value="UniProtKB-SubCell"/>
</dbReference>
<dbReference type="GO" id="GO:0004815">
    <property type="term" value="F:aspartate-tRNA ligase activity"/>
    <property type="evidence" value="ECO:0007669"/>
    <property type="project" value="UniProtKB-UniRule"/>
</dbReference>
<dbReference type="GO" id="GO:0050560">
    <property type="term" value="F:aspartate-tRNA(Asn) ligase activity"/>
    <property type="evidence" value="ECO:0007669"/>
    <property type="project" value="UniProtKB-EC"/>
</dbReference>
<dbReference type="GO" id="GO:0005524">
    <property type="term" value="F:ATP binding"/>
    <property type="evidence" value="ECO:0007669"/>
    <property type="project" value="UniProtKB-UniRule"/>
</dbReference>
<dbReference type="GO" id="GO:0003676">
    <property type="term" value="F:nucleic acid binding"/>
    <property type="evidence" value="ECO:0007669"/>
    <property type="project" value="InterPro"/>
</dbReference>
<dbReference type="GO" id="GO:0006422">
    <property type="term" value="P:aspartyl-tRNA aminoacylation"/>
    <property type="evidence" value="ECO:0007669"/>
    <property type="project" value="UniProtKB-UniRule"/>
</dbReference>
<dbReference type="CDD" id="cd00777">
    <property type="entry name" value="AspRS_core"/>
    <property type="match status" value="1"/>
</dbReference>
<dbReference type="CDD" id="cd04317">
    <property type="entry name" value="EcAspRS_like_N"/>
    <property type="match status" value="1"/>
</dbReference>
<dbReference type="Gene3D" id="3.30.930.10">
    <property type="entry name" value="Bira Bifunctional Protein, Domain 2"/>
    <property type="match status" value="1"/>
</dbReference>
<dbReference type="Gene3D" id="3.30.1360.30">
    <property type="entry name" value="GAD-like domain"/>
    <property type="match status" value="1"/>
</dbReference>
<dbReference type="Gene3D" id="2.40.50.140">
    <property type="entry name" value="Nucleic acid-binding proteins"/>
    <property type="match status" value="1"/>
</dbReference>
<dbReference type="HAMAP" id="MF_00044">
    <property type="entry name" value="Asp_tRNA_synth_type1"/>
    <property type="match status" value="1"/>
</dbReference>
<dbReference type="InterPro" id="IPR004364">
    <property type="entry name" value="Aa-tRNA-synt_II"/>
</dbReference>
<dbReference type="InterPro" id="IPR006195">
    <property type="entry name" value="aa-tRNA-synth_II"/>
</dbReference>
<dbReference type="InterPro" id="IPR045864">
    <property type="entry name" value="aa-tRNA-synth_II/BPL/LPL"/>
</dbReference>
<dbReference type="InterPro" id="IPR004524">
    <property type="entry name" value="Asp-tRNA-ligase_1"/>
</dbReference>
<dbReference type="InterPro" id="IPR047089">
    <property type="entry name" value="Asp-tRNA-ligase_1_N"/>
</dbReference>
<dbReference type="InterPro" id="IPR002312">
    <property type="entry name" value="Asp/Asn-tRNA-synth_IIb"/>
</dbReference>
<dbReference type="InterPro" id="IPR047090">
    <property type="entry name" value="AspRS_core"/>
</dbReference>
<dbReference type="InterPro" id="IPR004115">
    <property type="entry name" value="GAD-like_sf"/>
</dbReference>
<dbReference type="InterPro" id="IPR029351">
    <property type="entry name" value="GAD_dom"/>
</dbReference>
<dbReference type="InterPro" id="IPR012340">
    <property type="entry name" value="NA-bd_OB-fold"/>
</dbReference>
<dbReference type="InterPro" id="IPR004365">
    <property type="entry name" value="NA-bd_OB_tRNA"/>
</dbReference>
<dbReference type="NCBIfam" id="TIGR00459">
    <property type="entry name" value="aspS_bact"/>
    <property type="match status" value="1"/>
</dbReference>
<dbReference type="NCBIfam" id="NF001750">
    <property type="entry name" value="PRK00476.1"/>
    <property type="match status" value="1"/>
</dbReference>
<dbReference type="PANTHER" id="PTHR22594:SF5">
    <property type="entry name" value="ASPARTATE--TRNA LIGASE, MITOCHONDRIAL"/>
    <property type="match status" value="1"/>
</dbReference>
<dbReference type="PANTHER" id="PTHR22594">
    <property type="entry name" value="ASPARTYL/LYSYL-TRNA SYNTHETASE"/>
    <property type="match status" value="1"/>
</dbReference>
<dbReference type="Pfam" id="PF02938">
    <property type="entry name" value="GAD"/>
    <property type="match status" value="1"/>
</dbReference>
<dbReference type="Pfam" id="PF00152">
    <property type="entry name" value="tRNA-synt_2"/>
    <property type="match status" value="1"/>
</dbReference>
<dbReference type="Pfam" id="PF01336">
    <property type="entry name" value="tRNA_anti-codon"/>
    <property type="match status" value="1"/>
</dbReference>
<dbReference type="PRINTS" id="PR01042">
    <property type="entry name" value="TRNASYNTHASP"/>
</dbReference>
<dbReference type="SUPFAM" id="SSF55681">
    <property type="entry name" value="Class II aaRS and biotin synthetases"/>
    <property type="match status" value="1"/>
</dbReference>
<dbReference type="SUPFAM" id="SSF55261">
    <property type="entry name" value="GAD domain-like"/>
    <property type="match status" value="1"/>
</dbReference>
<dbReference type="SUPFAM" id="SSF50249">
    <property type="entry name" value="Nucleic acid-binding proteins"/>
    <property type="match status" value="1"/>
</dbReference>
<dbReference type="PROSITE" id="PS50862">
    <property type="entry name" value="AA_TRNA_LIGASE_II"/>
    <property type="match status" value="1"/>
</dbReference>
<proteinExistence type="inferred from homology"/>
<name>SYDND_CAMHC</name>